<protein>
    <recommendedName>
        <fullName evidence="2">Ornithine carbamoyltransferase</fullName>
        <shortName evidence="2">OTCase</shortName>
        <ecNumber evidence="2">2.1.3.3</ecNumber>
    </recommendedName>
</protein>
<comment type="function">
    <text evidence="1">Reversibly catalyzes the transfer of the carbamoyl group from carbamoyl phosphate (CP) to the N(epsilon) atom of ornithine (ORN) to produce L-citrulline.</text>
</comment>
<comment type="catalytic activity">
    <reaction evidence="2">
        <text>carbamoyl phosphate + L-ornithine = L-citrulline + phosphate + H(+)</text>
        <dbReference type="Rhea" id="RHEA:19513"/>
        <dbReference type="ChEBI" id="CHEBI:15378"/>
        <dbReference type="ChEBI" id="CHEBI:43474"/>
        <dbReference type="ChEBI" id="CHEBI:46911"/>
        <dbReference type="ChEBI" id="CHEBI:57743"/>
        <dbReference type="ChEBI" id="CHEBI:58228"/>
        <dbReference type="EC" id="2.1.3.3"/>
    </reaction>
</comment>
<comment type="pathway">
    <text evidence="2">Amino-acid degradation; L-arginine degradation via ADI pathway; carbamoyl phosphate from L-arginine: step 2/2.</text>
</comment>
<comment type="subcellular location">
    <subcellularLocation>
        <location evidence="2">Cytoplasm</location>
    </subcellularLocation>
</comment>
<comment type="similarity">
    <text evidence="2">Belongs to the aspartate/ornithine carbamoyltransferase superfamily. OTCase family.</text>
</comment>
<organism>
    <name type="scientific">Clostridium botulinum (strain Langeland / NCTC 10281 / Type F)</name>
    <dbReference type="NCBI Taxonomy" id="441772"/>
    <lineage>
        <taxon>Bacteria</taxon>
        <taxon>Bacillati</taxon>
        <taxon>Bacillota</taxon>
        <taxon>Clostridia</taxon>
        <taxon>Eubacteriales</taxon>
        <taxon>Clostridiaceae</taxon>
        <taxon>Clostridium</taxon>
    </lineage>
</organism>
<proteinExistence type="inferred from homology"/>
<sequence>MFNLKNRNFLTLMDFTPKEINYFLDLARDLKRAKYTGTEVQRMKGKNIALIFEKASTRTRCAFEVGAKDQGAHVTYLGPTGSHIGKKESAADTARVLGRMYDGIEYRGFGQEIVETLAEYAGVPVWNGLTDEDHPTQILADFLTIREHFNKPLSEIKFAYVGDGANNMANALMIGAVKMGMDFRIVSPKEIPTDATLVAKCKEIAAETGAKVTITDNIEEGVKGCDVLYTDVWVSMGEPDSVWESKIKLLTPYRVDMNMIKMTGNPDAKFMHCLPAFHDEETAVGKEIKEKYGLSEMEVSHELFESKYSIVFDEAENRMHTIKAVMVATLGDQ</sequence>
<evidence type="ECO:0000250" key="1"/>
<evidence type="ECO:0000255" key="2">
    <source>
        <dbReference type="HAMAP-Rule" id="MF_01109"/>
    </source>
</evidence>
<feature type="chain" id="PRO_1000065089" description="Ornithine carbamoyltransferase">
    <location>
        <begin position="1"/>
        <end position="333"/>
    </location>
</feature>
<feature type="binding site" evidence="2">
    <location>
        <begin position="56"/>
        <end position="59"/>
    </location>
    <ligand>
        <name>carbamoyl phosphate</name>
        <dbReference type="ChEBI" id="CHEBI:58228"/>
    </ligand>
</feature>
<feature type="binding site" evidence="2">
    <location>
        <position position="107"/>
    </location>
    <ligand>
        <name>carbamoyl phosphate</name>
        <dbReference type="ChEBI" id="CHEBI:58228"/>
    </ligand>
</feature>
<feature type="binding site" evidence="2">
    <location>
        <begin position="134"/>
        <end position="137"/>
    </location>
    <ligand>
        <name>carbamoyl phosphate</name>
        <dbReference type="ChEBI" id="CHEBI:58228"/>
    </ligand>
</feature>
<feature type="binding site" evidence="2">
    <location>
        <position position="167"/>
    </location>
    <ligand>
        <name>L-ornithine</name>
        <dbReference type="ChEBI" id="CHEBI:46911"/>
    </ligand>
</feature>
<feature type="binding site" evidence="2">
    <location>
        <position position="231"/>
    </location>
    <ligand>
        <name>L-ornithine</name>
        <dbReference type="ChEBI" id="CHEBI:46911"/>
    </ligand>
</feature>
<feature type="binding site" evidence="2">
    <location>
        <begin position="235"/>
        <end position="236"/>
    </location>
    <ligand>
        <name>L-ornithine</name>
        <dbReference type="ChEBI" id="CHEBI:46911"/>
    </ligand>
</feature>
<feature type="binding site" evidence="2">
    <location>
        <begin position="273"/>
        <end position="274"/>
    </location>
    <ligand>
        <name>carbamoyl phosphate</name>
        <dbReference type="ChEBI" id="CHEBI:58228"/>
    </ligand>
</feature>
<feature type="binding site" evidence="2">
    <location>
        <position position="318"/>
    </location>
    <ligand>
        <name>carbamoyl phosphate</name>
        <dbReference type="ChEBI" id="CHEBI:58228"/>
    </ligand>
</feature>
<name>OTC_CLOBL</name>
<gene>
    <name evidence="2" type="primary">arcB</name>
    <name type="ordered locus">CLI_2656</name>
</gene>
<reference key="1">
    <citation type="submission" date="2007-06" db="EMBL/GenBank/DDBJ databases">
        <authorList>
            <person name="Brinkac L.M."/>
            <person name="Daugherty S."/>
            <person name="Dodson R.J."/>
            <person name="Madupu R."/>
            <person name="Brown J.L."/>
            <person name="Bruce D."/>
            <person name="Detter C."/>
            <person name="Munk C."/>
            <person name="Smith L.A."/>
            <person name="Smith T.J."/>
            <person name="White O."/>
            <person name="Brettin T.S."/>
        </authorList>
    </citation>
    <scope>NUCLEOTIDE SEQUENCE [LARGE SCALE GENOMIC DNA]</scope>
    <source>
        <strain>Langeland / NCTC 10281 / Type F</strain>
    </source>
</reference>
<keyword id="KW-0056">Arginine metabolism</keyword>
<keyword id="KW-0963">Cytoplasm</keyword>
<keyword id="KW-0808">Transferase</keyword>
<accession>A7GGI0</accession>
<dbReference type="EC" id="2.1.3.3" evidence="2"/>
<dbReference type="EMBL" id="CP000728">
    <property type="protein sequence ID" value="ABS42372.1"/>
    <property type="molecule type" value="Genomic_DNA"/>
</dbReference>
<dbReference type="SMR" id="A7GGI0"/>
<dbReference type="KEGG" id="cbf:CLI_2656"/>
<dbReference type="HOGENOM" id="CLU_043846_3_1_9"/>
<dbReference type="UniPathway" id="UPA00254">
    <property type="reaction ID" value="UER00365"/>
</dbReference>
<dbReference type="Proteomes" id="UP000002410">
    <property type="component" value="Chromosome"/>
</dbReference>
<dbReference type="GO" id="GO:0005737">
    <property type="term" value="C:cytoplasm"/>
    <property type="evidence" value="ECO:0007669"/>
    <property type="project" value="UniProtKB-SubCell"/>
</dbReference>
<dbReference type="GO" id="GO:0016597">
    <property type="term" value="F:amino acid binding"/>
    <property type="evidence" value="ECO:0007669"/>
    <property type="project" value="InterPro"/>
</dbReference>
<dbReference type="GO" id="GO:0004585">
    <property type="term" value="F:ornithine carbamoyltransferase activity"/>
    <property type="evidence" value="ECO:0007669"/>
    <property type="project" value="UniProtKB-UniRule"/>
</dbReference>
<dbReference type="GO" id="GO:0042450">
    <property type="term" value="P:arginine biosynthetic process via ornithine"/>
    <property type="evidence" value="ECO:0007669"/>
    <property type="project" value="TreeGrafter"/>
</dbReference>
<dbReference type="GO" id="GO:0019547">
    <property type="term" value="P:arginine catabolic process to ornithine"/>
    <property type="evidence" value="ECO:0007669"/>
    <property type="project" value="UniProtKB-UniRule"/>
</dbReference>
<dbReference type="GO" id="GO:0019240">
    <property type="term" value="P:citrulline biosynthetic process"/>
    <property type="evidence" value="ECO:0007669"/>
    <property type="project" value="TreeGrafter"/>
</dbReference>
<dbReference type="FunFam" id="3.40.50.1370:FF:000004">
    <property type="entry name" value="Ornithine carbamoyltransferase"/>
    <property type="match status" value="1"/>
</dbReference>
<dbReference type="Gene3D" id="3.40.50.1370">
    <property type="entry name" value="Aspartate/ornithine carbamoyltransferase"/>
    <property type="match status" value="2"/>
</dbReference>
<dbReference type="HAMAP" id="MF_01109">
    <property type="entry name" value="OTCase"/>
    <property type="match status" value="1"/>
</dbReference>
<dbReference type="InterPro" id="IPR006132">
    <property type="entry name" value="Asp/Orn_carbamoyltranf_P-bd"/>
</dbReference>
<dbReference type="InterPro" id="IPR006130">
    <property type="entry name" value="Asp/Orn_carbamoylTrfase"/>
</dbReference>
<dbReference type="InterPro" id="IPR036901">
    <property type="entry name" value="Asp/Orn_carbamoylTrfase_sf"/>
</dbReference>
<dbReference type="InterPro" id="IPR006131">
    <property type="entry name" value="Asp_carbamoyltransf_Asp/Orn-bd"/>
</dbReference>
<dbReference type="InterPro" id="IPR002292">
    <property type="entry name" value="Orn/put_carbamltrans"/>
</dbReference>
<dbReference type="InterPro" id="IPR024904">
    <property type="entry name" value="OTCase_ArgI"/>
</dbReference>
<dbReference type="NCBIfam" id="TIGR00658">
    <property type="entry name" value="orni_carb_tr"/>
    <property type="match status" value="1"/>
</dbReference>
<dbReference type="NCBIfam" id="NF003286">
    <property type="entry name" value="PRK04284.1"/>
    <property type="match status" value="1"/>
</dbReference>
<dbReference type="PANTHER" id="PTHR45753:SF2">
    <property type="entry name" value="ORNITHINE CARBAMOYLTRANSFERASE"/>
    <property type="match status" value="1"/>
</dbReference>
<dbReference type="PANTHER" id="PTHR45753">
    <property type="entry name" value="ORNITHINE CARBAMOYLTRANSFERASE, MITOCHONDRIAL"/>
    <property type="match status" value="1"/>
</dbReference>
<dbReference type="Pfam" id="PF00185">
    <property type="entry name" value="OTCace"/>
    <property type="match status" value="1"/>
</dbReference>
<dbReference type="Pfam" id="PF02729">
    <property type="entry name" value="OTCace_N"/>
    <property type="match status" value="1"/>
</dbReference>
<dbReference type="PRINTS" id="PR00100">
    <property type="entry name" value="AOTCASE"/>
</dbReference>
<dbReference type="PRINTS" id="PR00102">
    <property type="entry name" value="OTCASE"/>
</dbReference>
<dbReference type="SUPFAM" id="SSF53671">
    <property type="entry name" value="Aspartate/ornithine carbamoyltransferase"/>
    <property type="match status" value="1"/>
</dbReference>
<dbReference type="PROSITE" id="PS00097">
    <property type="entry name" value="CARBAMOYLTRANSFERASE"/>
    <property type="match status" value="1"/>
</dbReference>